<sequence length="482" mass="54606">MKFIVKPHPEIFCKSDSVRKRFIKILDSNIRIMVKRVSESVAVYNRRYHIEVTANDDSDRDQILAILMQTPGIHHTLEVKQTEFKDLHDIFEQTLELVGEQLEGKTFCVRAKRRGQHDFTSIELERYVGGGLNQAVESASVKLKNPDITVRIEVDYDHLHQVLHRHKGLGGFPLGTQEDVLSLISGGFDSGVSSYLHIKRGSKVHYCFFNLGGPAHEIGVKQVSHFLWKKYGSSAKVKFISIDFEPVVAEILEKVDNGQMGVVLKRMFMRAAGQVAERYGIQALVTGEALGQVSSQTLTNLRMIDNVTDSLILRPLINWDKEDIIDIARNIGTEEFAKTMPEFCGVISKNPTIKAVKAKLEKEEANFDFAILDRVIEEARVMDIRDIEKQSQEQAPEIELVDQIGDGAIVLDIRSPDEEDESPLVIDGVEVKHLPFYKLATQFGDLDQDKEYLLYCDRGVMSRLQALYLTENGYGNIKVYRP</sequence>
<evidence type="ECO:0000255" key="1">
    <source>
        <dbReference type="HAMAP-Rule" id="MF_00021"/>
    </source>
</evidence>
<dbReference type="EC" id="2.8.1.4" evidence="1"/>
<dbReference type="EMBL" id="CR378665">
    <property type="protein sequence ID" value="CAG19223.1"/>
    <property type="molecule type" value="Genomic_DNA"/>
</dbReference>
<dbReference type="RefSeq" id="WP_011217561.1">
    <property type="nucleotide sequence ID" value="NC_006370.1"/>
</dbReference>
<dbReference type="SMR" id="Q6LU02"/>
<dbReference type="STRING" id="298386.PBPRA0810"/>
<dbReference type="KEGG" id="ppr:PBPRA0810"/>
<dbReference type="eggNOG" id="COG0301">
    <property type="taxonomic scope" value="Bacteria"/>
</dbReference>
<dbReference type="eggNOG" id="COG0607">
    <property type="taxonomic scope" value="Bacteria"/>
</dbReference>
<dbReference type="HOGENOM" id="CLU_037952_4_1_6"/>
<dbReference type="UniPathway" id="UPA00060"/>
<dbReference type="Proteomes" id="UP000000593">
    <property type="component" value="Chromosome 1"/>
</dbReference>
<dbReference type="GO" id="GO:0005829">
    <property type="term" value="C:cytosol"/>
    <property type="evidence" value="ECO:0007669"/>
    <property type="project" value="TreeGrafter"/>
</dbReference>
<dbReference type="GO" id="GO:0005524">
    <property type="term" value="F:ATP binding"/>
    <property type="evidence" value="ECO:0007669"/>
    <property type="project" value="UniProtKB-UniRule"/>
</dbReference>
<dbReference type="GO" id="GO:0004810">
    <property type="term" value="F:CCA tRNA nucleotidyltransferase activity"/>
    <property type="evidence" value="ECO:0007669"/>
    <property type="project" value="InterPro"/>
</dbReference>
<dbReference type="GO" id="GO:0000049">
    <property type="term" value="F:tRNA binding"/>
    <property type="evidence" value="ECO:0007669"/>
    <property type="project" value="UniProtKB-UniRule"/>
</dbReference>
<dbReference type="GO" id="GO:0140741">
    <property type="term" value="F:tRNA-uracil-4 sulfurtransferase activity"/>
    <property type="evidence" value="ECO:0007669"/>
    <property type="project" value="UniProtKB-EC"/>
</dbReference>
<dbReference type="GO" id="GO:0009228">
    <property type="term" value="P:thiamine biosynthetic process"/>
    <property type="evidence" value="ECO:0007669"/>
    <property type="project" value="UniProtKB-KW"/>
</dbReference>
<dbReference type="GO" id="GO:0009229">
    <property type="term" value="P:thiamine diphosphate biosynthetic process"/>
    <property type="evidence" value="ECO:0007669"/>
    <property type="project" value="UniProtKB-UniRule"/>
</dbReference>
<dbReference type="GO" id="GO:0052837">
    <property type="term" value="P:thiazole biosynthetic process"/>
    <property type="evidence" value="ECO:0007669"/>
    <property type="project" value="InterPro"/>
</dbReference>
<dbReference type="GO" id="GO:0002937">
    <property type="term" value="P:tRNA 4-thiouridine biosynthesis"/>
    <property type="evidence" value="ECO:0007669"/>
    <property type="project" value="TreeGrafter"/>
</dbReference>
<dbReference type="CDD" id="cd01712">
    <property type="entry name" value="PPase_ThiI"/>
    <property type="match status" value="1"/>
</dbReference>
<dbReference type="CDD" id="cd00158">
    <property type="entry name" value="RHOD"/>
    <property type="match status" value="1"/>
</dbReference>
<dbReference type="CDD" id="cd11716">
    <property type="entry name" value="THUMP_ThiI"/>
    <property type="match status" value="1"/>
</dbReference>
<dbReference type="FunFam" id="3.40.50.620:FF:000029">
    <property type="entry name" value="tRNA sulfurtransferase"/>
    <property type="match status" value="1"/>
</dbReference>
<dbReference type="Gene3D" id="3.30.2130.30">
    <property type="match status" value="1"/>
</dbReference>
<dbReference type="Gene3D" id="3.40.50.620">
    <property type="entry name" value="HUPs"/>
    <property type="match status" value="1"/>
</dbReference>
<dbReference type="Gene3D" id="3.40.250.10">
    <property type="entry name" value="Rhodanese-like domain"/>
    <property type="match status" value="1"/>
</dbReference>
<dbReference type="HAMAP" id="MF_00021">
    <property type="entry name" value="ThiI"/>
    <property type="match status" value="1"/>
</dbReference>
<dbReference type="InterPro" id="IPR001763">
    <property type="entry name" value="Rhodanese-like_dom"/>
</dbReference>
<dbReference type="InterPro" id="IPR036873">
    <property type="entry name" value="Rhodanese-like_dom_sf"/>
</dbReference>
<dbReference type="InterPro" id="IPR014729">
    <property type="entry name" value="Rossmann-like_a/b/a_fold"/>
</dbReference>
<dbReference type="InterPro" id="IPR020536">
    <property type="entry name" value="ThiI_AANH"/>
</dbReference>
<dbReference type="InterPro" id="IPR054173">
    <property type="entry name" value="ThiI_fer"/>
</dbReference>
<dbReference type="InterPro" id="IPR049961">
    <property type="entry name" value="ThiI_N"/>
</dbReference>
<dbReference type="InterPro" id="IPR026340">
    <property type="entry name" value="THII_Thiazole_biosynth_dom"/>
</dbReference>
<dbReference type="InterPro" id="IPR004114">
    <property type="entry name" value="THUMP_dom"/>
</dbReference>
<dbReference type="InterPro" id="IPR049962">
    <property type="entry name" value="THUMP_ThiI"/>
</dbReference>
<dbReference type="InterPro" id="IPR003720">
    <property type="entry name" value="tRNA_STrfase"/>
</dbReference>
<dbReference type="InterPro" id="IPR050102">
    <property type="entry name" value="tRNA_sulfurtransferase_ThiI"/>
</dbReference>
<dbReference type="NCBIfam" id="TIGR04271">
    <property type="entry name" value="ThiI_C_thiazole"/>
    <property type="match status" value="1"/>
</dbReference>
<dbReference type="NCBIfam" id="TIGR00342">
    <property type="entry name" value="tRNA uracil 4-sulfurtransferase ThiI"/>
    <property type="match status" value="1"/>
</dbReference>
<dbReference type="PANTHER" id="PTHR43209">
    <property type="entry name" value="TRNA SULFURTRANSFERASE"/>
    <property type="match status" value="1"/>
</dbReference>
<dbReference type="PANTHER" id="PTHR43209:SF1">
    <property type="entry name" value="TRNA SULFURTRANSFERASE"/>
    <property type="match status" value="1"/>
</dbReference>
<dbReference type="Pfam" id="PF00581">
    <property type="entry name" value="Rhodanese"/>
    <property type="match status" value="1"/>
</dbReference>
<dbReference type="Pfam" id="PF02568">
    <property type="entry name" value="ThiI"/>
    <property type="match status" value="1"/>
</dbReference>
<dbReference type="Pfam" id="PF22025">
    <property type="entry name" value="ThiI_fer"/>
    <property type="match status" value="1"/>
</dbReference>
<dbReference type="Pfam" id="PF02926">
    <property type="entry name" value="THUMP"/>
    <property type="match status" value="1"/>
</dbReference>
<dbReference type="SMART" id="SM00981">
    <property type="entry name" value="THUMP"/>
    <property type="match status" value="1"/>
</dbReference>
<dbReference type="SUPFAM" id="SSF52402">
    <property type="entry name" value="Adenine nucleotide alpha hydrolases-like"/>
    <property type="match status" value="1"/>
</dbReference>
<dbReference type="SUPFAM" id="SSF52821">
    <property type="entry name" value="Rhodanese/Cell cycle control phosphatase"/>
    <property type="match status" value="1"/>
</dbReference>
<dbReference type="SUPFAM" id="SSF143437">
    <property type="entry name" value="THUMP domain-like"/>
    <property type="match status" value="1"/>
</dbReference>
<dbReference type="PROSITE" id="PS50206">
    <property type="entry name" value="RHODANESE_3"/>
    <property type="match status" value="1"/>
</dbReference>
<dbReference type="PROSITE" id="PS51165">
    <property type="entry name" value="THUMP"/>
    <property type="match status" value="1"/>
</dbReference>
<organism>
    <name type="scientific">Photobacterium profundum (strain SS9)</name>
    <dbReference type="NCBI Taxonomy" id="298386"/>
    <lineage>
        <taxon>Bacteria</taxon>
        <taxon>Pseudomonadati</taxon>
        <taxon>Pseudomonadota</taxon>
        <taxon>Gammaproteobacteria</taxon>
        <taxon>Vibrionales</taxon>
        <taxon>Vibrionaceae</taxon>
        <taxon>Photobacterium</taxon>
    </lineage>
</organism>
<gene>
    <name evidence="1" type="primary">thiI</name>
    <name type="ordered locus">PBPRA0810</name>
</gene>
<comment type="function">
    <text evidence="1">Catalyzes the ATP-dependent transfer of a sulfur to tRNA to produce 4-thiouridine in position 8 of tRNAs, which functions as a near-UV photosensor. Also catalyzes the transfer of sulfur to the sulfur carrier protein ThiS, forming ThiS-thiocarboxylate. This is a step in the synthesis of thiazole, in the thiamine biosynthesis pathway. The sulfur is donated as persulfide by IscS.</text>
</comment>
<comment type="catalytic activity">
    <reaction evidence="1">
        <text>[ThiI sulfur-carrier protein]-S-sulfanyl-L-cysteine + a uridine in tRNA + 2 reduced [2Fe-2S]-[ferredoxin] + ATP + H(+) = [ThiI sulfur-carrier protein]-L-cysteine + a 4-thiouridine in tRNA + 2 oxidized [2Fe-2S]-[ferredoxin] + AMP + diphosphate</text>
        <dbReference type="Rhea" id="RHEA:24176"/>
        <dbReference type="Rhea" id="RHEA-COMP:10000"/>
        <dbReference type="Rhea" id="RHEA-COMP:10001"/>
        <dbReference type="Rhea" id="RHEA-COMP:13337"/>
        <dbReference type="Rhea" id="RHEA-COMP:13338"/>
        <dbReference type="Rhea" id="RHEA-COMP:13339"/>
        <dbReference type="Rhea" id="RHEA-COMP:13340"/>
        <dbReference type="ChEBI" id="CHEBI:15378"/>
        <dbReference type="ChEBI" id="CHEBI:29950"/>
        <dbReference type="ChEBI" id="CHEBI:30616"/>
        <dbReference type="ChEBI" id="CHEBI:33019"/>
        <dbReference type="ChEBI" id="CHEBI:33737"/>
        <dbReference type="ChEBI" id="CHEBI:33738"/>
        <dbReference type="ChEBI" id="CHEBI:61963"/>
        <dbReference type="ChEBI" id="CHEBI:65315"/>
        <dbReference type="ChEBI" id="CHEBI:136798"/>
        <dbReference type="ChEBI" id="CHEBI:456215"/>
        <dbReference type="EC" id="2.8.1.4"/>
    </reaction>
</comment>
<comment type="catalytic activity">
    <reaction evidence="1">
        <text>[ThiS sulfur-carrier protein]-C-terminal Gly-Gly-AMP + S-sulfanyl-L-cysteinyl-[cysteine desulfurase] + AH2 = [ThiS sulfur-carrier protein]-C-terminal-Gly-aminoethanethioate + L-cysteinyl-[cysteine desulfurase] + A + AMP + 2 H(+)</text>
        <dbReference type="Rhea" id="RHEA:43340"/>
        <dbReference type="Rhea" id="RHEA-COMP:12157"/>
        <dbReference type="Rhea" id="RHEA-COMP:12158"/>
        <dbReference type="Rhea" id="RHEA-COMP:12910"/>
        <dbReference type="Rhea" id="RHEA-COMP:19908"/>
        <dbReference type="ChEBI" id="CHEBI:13193"/>
        <dbReference type="ChEBI" id="CHEBI:15378"/>
        <dbReference type="ChEBI" id="CHEBI:17499"/>
        <dbReference type="ChEBI" id="CHEBI:29950"/>
        <dbReference type="ChEBI" id="CHEBI:61963"/>
        <dbReference type="ChEBI" id="CHEBI:90618"/>
        <dbReference type="ChEBI" id="CHEBI:232372"/>
        <dbReference type="ChEBI" id="CHEBI:456215"/>
    </reaction>
</comment>
<comment type="pathway">
    <text evidence="1">Cofactor biosynthesis; thiamine diphosphate biosynthesis.</text>
</comment>
<comment type="subcellular location">
    <subcellularLocation>
        <location evidence="1">Cytoplasm</location>
    </subcellularLocation>
</comment>
<comment type="similarity">
    <text evidence="1">Belongs to the ThiI family.</text>
</comment>
<keyword id="KW-0067">ATP-binding</keyword>
<keyword id="KW-0963">Cytoplasm</keyword>
<keyword id="KW-1015">Disulfide bond</keyword>
<keyword id="KW-0547">Nucleotide-binding</keyword>
<keyword id="KW-0676">Redox-active center</keyword>
<keyword id="KW-1185">Reference proteome</keyword>
<keyword id="KW-0694">RNA-binding</keyword>
<keyword id="KW-0784">Thiamine biosynthesis</keyword>
<keyword id="KW-0808">Transferase</keyword>
<keyword id="KW-0820">tRNA-binding</keyword>
<protein>
    <recommendedName>
        <fullName evidence="1">tRNA sulfurtransferase</fullName>
        <ecNumber evidence="1">2.8.1.4</ecNumber>
    </recommendedName>
    <alternativeName>
        <fullName evidence="1">Sulfur carrier protein ThiS sulfurtransferase</fullName>
    </alternativeName>
    <alternativeName>
        <fullName evidence="1">Thiamine biosynthesis protein ThiI</fullName>
    </alternativeName>
    <alternativeName>
        <fullName evidence="1">tRNA 4-thiouridine synthase</fullName>
    </alternativeName>
</protein>
<accession>Q6LU02</accession>
<reference key="1">
    <citation type="journal article" date="2005" name="Science">
        <title>Life at depth: Photobacterium profundum genome sequence and expression analysis.</title>
        <authorList>
            <person name="Vezzi A."/>
            <person name="Campanaro S."/>
            <person name="D'Angelo M."/>
            <person name="Simonato F."/>
            <person name="Vitulo N."/>
            <person name="Lauro F.M."/>
            <person name="Cestaro A."/>
            <person name="Malacrida G."/>
            <person name="Simionati B."/>
            <person name="Cannata N."/>
            <person name="Romualdi C."/>
            <person name="Bartlett D.H."/>
            <person name="Valle G."/>
        </authorList>
    </citation>
    <scope>NUCLEOTIDE SEQUENCE [LARGE SCALE GENOMIC DNA]</scope>
    <source>
        <strain>ATCC BAA-1253 / SS9</strain>
    </source>
</reference>
<name>THII_PHOPR</name>
<proteinExistence type="inferred from homology"/>
<feature type="chain" id="PRO_1000074249" description="tRNA sulfurtransferase">
    <location>
        <begin position="1"/>
        <end position="482"/>
    </location>
</feature>
<feature type="domain" description="THUMP" evidence="1">
    <location>
        <begin position="61"/>
        <end position="165"/>
    </location>
</feature>
<feature type="domain" description="Rhodanese" evidence="1">
    <location>
        <begin position="404"/>
        <end position="482"/>
    </location>
</feature>
<feature type="active site" description="Cysteine persulfide intermediate" evidence="1">
    <location>
        <position position="456"/>
    </location>
</feature>
<feature type="binding site" evidence="1">
    <location>
        <begin position="183"/>
        <end position="184"/>
    </location>
    <ligand>
        <name>ATP</name>
        <dbReference type="ChEBI" id="CHEBI:30616"/>
    </ligand>
</feature>
<feature type="binding site" evidence="1">
    <location>
        <position position="265"/>
    </location>
    <ligand>
        <name>ATP</name>
        <dbReference type="ChEBI" id="CHEBI:30616"/>
    </ligand>
</feature>
<feature type="binding site" evidence="1">
    <location>
        <position position="287"/>
    </location>
    <ligand>
        <name>ATP</name>
        <dbReference type="ChEBI" id="CHEBI:30616"/>
    </ligand>
</feature>
<feature type="binding site" evidence="1">
    <location>
        <position position="296"/>
    </location>
    <ligand>
        <name>ATP</name>
        <dbReference type="ChEBI" id="CHEBI:30616"/>
    </ligand>
</feature>
<feature type="disulfide bond" description="Redox-active" evidence="1">
    <location>
        <begin position="344"/>
        <end position="456"/>
    </location>
</feature>